<name>ARNF_PROMH</name>
<comment type="function">
    <text evidence="1">Translocates 4-amino-4-deoxy-L-arabinose-phosphoundecaprenol (alpha-L-Ara4N-phosphoundecaprenol) from the cytoplasmic to the periplasmic side of the inner membrane.</text>
</comment>
<comment type="pathway">
    <text evidence="1">Bacterial outer membrane biogenesis; lipopolysaccharide biosynthesis.</text>
</comment>
<comment type="subunit">
    <text evidence="1">Heterodimer of ArnE and ArnF.</text>
</comment>
<comment type="subcellular location">
    <subcellularLocation>
        <location evidence="1">Cell inner membrane</location>
        <topology evidence="1">Multi-pass membrane protein</topology>
    </subcellularLocation>
</comment>
<comment type="similarity">
    <text evidence="1">Belongs to the ArnF family.</text>
</comment>
<accession>B4ETM1</accession>
<evidence type="ECO:0000255" key="1">
    <source>
        <dbReference type="HAMAP-Rule" id="MF_00538"/>
    </source>
</evidence>
<proteinExistence type="inferred from homology"/>
<sequence length="133" mass="15226">MKTGYLWAIASALLVTVAQLLLKIGMSELPDLQLEKQWFDLHWLWANIIPISVVFVGLIGYVLSMVCWLLTLRTIPLNKAYPLISLSYVFVYILAVVLPWFQETLSWSKTIGIIFIMLGVWLISQKTEQTTSH</sequence>
<keyword id="KW-0997">Cell inner membrane</keyword>
<keyword id="KW-1003">Cell membrane</keyword>
<keyword id="KW-0441">Lipid A biosynthesis</keyword>
<keyword id="KW-0444">Lipid biosynthesis</keyword>
<keyword id="KW-0443">Lipid metabolism</keyword>
<keyword id="KW-0448">Lipopolysaccharide biosynthesis</keyword>
<keyword id="KW-0472">Membrane</keyword>
<keyword id="KW-1185">Reference proteome</keyword>
<keyword id="KW-0812">Transmembrane</keyword>
<keyword id="KW-1133">Transmembrane helix</keyword>
<keyword id="KW-0813">Transport</keyword>
<dbReference type="EMBL" id="AM942759">
    <property type="protein sequence ID" value="CAR42276.1"/>
    <property type="molecule type" value="Genomic_DNA"/>
</dbReference>
<dbReference type="RefSeq" id="WP_004242625.1">
    <property type="nucleotide sequence ID" value="NC_010554.1"/>
</dbReference>
<dbReference type="EnsemblBacteria" id="CAR42276">
    <property type="protein sequence ID" value="CAR42276"/>
    <property type="gene ID" value="PMI1049"/>
</dbReference>
<dbReference type="GeneID" id="6803536"/>
<dbReference type="KEGG" id="pmr:PMI1049"/>
<dbReference type="eggNOG" id="COG2076">
    <property type="taxonomic scope" value="Bacteria"/>
</dbReference>
<dbReference type="HOGENOM" id="CLU_131462_1_0_6"/>
<dbReference type="UniPathway" id="UPA00030"/>
<dbReference type="Proteomes" id="UP000008319">
    <property type="component" value="Chromosome"/>
</dbReference>
<dbReference type="GO" id="GO:0005886">
    <property type="term" value="C:plasma membrane"/>
    <property type="evidence" value="ECO:0007669"/>
    <property type="project" value="UniProtKB-SubCell"/>
</dbReference>
<dbReference type="GO" id="GO:1901505">
    <property type="term" value="F:carbohydrate derivative transmembrane transporter activity"/>
    <property type="evidence" value="ECO:0007669"/>
    <property type="project" value="InterPro"/>
</dbReference>
<dbReference type="GO" id="GO:0009245">
    <property type="term" value="P:lipid A biosynthetic process"/>
    <property type="evidence" value="ECO:0007669"/>
    <property type="project" value="UniProtKB-UniRule"/>
</dbReference>
<dbReference type="GO" id="GO:0009103">
    <property type="term" value="P:lipopolysaccharide biosynthetic process"/>
    <property type="evidence" value="ECO:0007669"/>
    <property type="project" value="UniProtKB-UniRule"/>
</dbReference>
<dbReference type="Gene3D" id="1.10.3730.20">
    <property type="match status" value="1"/>
</dbReference>
<dbReference type="HAMAP" id="MF_00538">
    <property type="entry name" value="Flippase_ArnF"/>
    <property type="match status" value="1"/>
</dbReference>
<dbReference type="InterPro" id="IPR000620">
    <property type="entry name" value="EamA_dom"/>
</dbReference>
<dbReference type="InterPro" id="IPR022832">
    <property type="entry name" value="Flippase_ArnF"/>
</dbReference>
<dbReference type="InterPro" id="IPR000390">
    <property type="entry name" value="Small_drug/metabolite_transptr"/>
</dbReference>
<dbReference type="NCBIfam" id="NF002816">
    <property type="entry name" value="PRK02971.1-2"/>
    <property type="match status" value="1"/>
</dbReference>
<dbReference type="PANTHER" id="PTHR30561:SF9">
    <property type="entry name" value="4-AMINO-4-DEOXY-L-ARABINOSE-PHOSPHOUNDECAPRENOL FLIPPASE SUBUNIT ARNF-RELATED"/>
    <property type="match status" value="1"/>
</dbReference>
<dbReference type="PANTHER" id="PTHR30561">
    <property type="entry name" value="SMR FAMILY PROTON-DEPENDENT DRUG EFFLUX TRANSPORTER SUGE"/>
    <property type="match status" value="1"/>
</dbReference>
<dbReference type="Pfam" id="PF00892">
    <property type="entry name" value="EamA"/>
    <property type="match status" value="1"/>
</dbReference>
<dbReference type="SUPFAM" id="SSF103481">
    <property type="entry name" value="Multidrug resistance efflux transporter EmrE"/>
    <property type="match status" value="1"/>
</dbReference>
<feature type="chain" id="PRO_0000382008" description="Probable 4-amino-4-deoxy-L-arabinose-phosphoundecaprenol flippase subunit ArnF">
    <location>
        <begin position="1"/>
        <end position="133"/>
    </location>
</feature>
<feature type="topological domain" description="Cytoplasmic" evidence="1">
    <location>
        <begin position="1"/>
        <end position="5"/>
    </location>
</feature>
<feature type="transmembrane region" description="Helical" evidence="1">
    <location>
        <begin position="6"/>
        <end position="26"/>
    </location>
</feature>
<feature type="topological domain" description="Periplasmic" evidence="1">
    <location>
        <begin position="27"/>
        <end position="47"/>
    </location>
</feature>
<feature type="transmembrane region" description="Helical" evidence="1">
    <location>
        <begin position="48"/>
        <end position="68"/>
    </location>
</feature>
<feature type="topological domain" description="Cytoplasmic" evidence="1">
    <location>
        <begin position="69"/>
        <end position="80"/>
    </location>
</feature>
<feature type="transmembrane region" description="Helical" evidence="1">
    <location>
        <begin position="81"/>
        <end position="101"/>
    </location>
</feature>
<feature type="topological domain" description="Periplasmic" evidence="1">
    <location>
        <begin position="102"/>
        <end position="103"/>
    </location>
</feature>
<feature type="transmembrane region" description="Helical" evidence="1">
    <location>
        <begin position="104"/>
        <end position="124"/>
    </location>
</feature>
<feature type="topological domain" description="Cytoplasmic" evidence="1">
    <location>
        <begin position="125"/>
        <end position="133"/>
    </location>
</feature>
<feature type="domain" description="EamA" evidence="1">
    <location>
        <begin position="51"/>
        <end position="125"/>
    </location>
</feature>
<reference key="1">
    <citation type="journal article" date="2008" name="J. Bacteriol.">
        <title>Complete genome sequence of uropathogenic Proteus mirabilis, a master of both adherence and motility.</title>
        <authorList>
            <person name="Pearson M.M."/>
            <person name="Sebaihia M."/>
            <person name="Churcher C."/>
            <person name="Quail M.A."/>
            <person name="Seshasayee A.S."/>
            <person name="Luscombe N.M."/>
            <person name="Abdellah Z."/>
            <person name="Arrosmith C."/>
            <person name="Atkin B."/>
            <person name="Chillingworth T."/>
            <person name="Hauser H."/>
            <person name="Jagels K."/>
            <person name="Moule S."/>
            <person name="Mungall K."/>
            <person name="Norbertczak H."/>
            <person name="Rabbinowitsch E."/>
            <person name="Walker D."/>
            <person name="Whithead S."/>
            <person name="Thomson N.R."/>
            <person name="Rather P.N."/>
            <person name="Parkhill J."/>
            <person name="Mobley H.L.T."/>
        </authorList>
    </citation>
    <scope>NUCLEOTIDE SEQUENCE [LARGE SCALE GENOMIC DNA]</scope>
    <source>
        <strain>HI4320</strain>
    </source>
</reference>
<organism>
    <name type="scientific">Proteus mirabilis (strain HI4320)</name>
    <dbReference type="NCBI Taxonomy" id="529507"/>
    <lineage>
        <taxon>Bacteria</taxon>
        <taxon>Pseudomonadati</taxon>
        <taxon>Pseudomonadota</taxon>
        <taxon>Gammaproteobacteria</taxon>
        <taxon>Enterobacterales</taxon>
        <taxon>Morganellaceae</taxon>
        <taxon>Proteus</taxon>
    </lineage>
</organism>
<gene>
    <name evidence="1" type="primary">arnF</name>
    <name type="ordered locus">PMI1049</name>
</gene>
<protein>
    <recommendedName>
        <fullName evidence="1">Probable 4-amino-4-deoxy-L-arabinose-phosphoundecaprenol flippase subunit ArnF</fullName>
        <shortName evidence="1">L-Ara4N-phosphoundecaprenol flippase subunit ArnF</shortName>
    </recommendedName>
    <alternativeName>
        <fullName evidence="1">Undecaprenyl phosphate-aminoarabinose flippase subunit ArnF</fullName>
    </alternativeName>
</protein>